<protein>
    <recommendedName>
        <fullName evidence="1">GTPase HflX</fullName>
    </recommendedName>
    <alternativeName>
        <fullName evidence="1">GTP-binding protein HflX</fullName>
    </alternativeName>
</protein>
<proteinExistence type="inferred from homology"/>
<name>HFLX_HYPBU</name>
<organism>
    <name type="scientific">Hyperthermus butylicus (strain DSM 5456 / JCM 9403 / PLM1-5)</name>
    <dbReference type="NCBI Taxonomy" id="415426"/>
    <lineage>
        <taxon>Archaea</taxon>
        <taxon>Thermoproteota</taxon>
        <taxon>Thermoprotei</taxon>
        <taxon>Desulfurococcales</taxon>
        <taxon>Pyrodictiaceae</taxon>
        <taxon>Hyperthermus</taxon>
    </lineage>
</organism>
<feature type="chain" id="PRO_0000412665" description="GTPase HflX">
    <location>
        <begin position="1"/>
        <end position="375"/>
    </location>
</feature>
<feature type="domain" description="Hflx-type G" evidence="1">
    <location>
        <begin position="194"/>
        <end position="371"/>
    </location>
</feature>
<feature type="binding site" evidence="1">
    <location>
        <begin position="200"/>
        <end position="207"/>
    </location>
    <ligand>
        <name>GTP</name>
        <dbReference type="ChEBI" id="CHEBI:37565"/>
    </ligand>
</feature>
<feature type="binding site" evidence="1">
    <location>
        <position position="207"/>
    </location>
    <ligand>
        <name>Mg(2+)</name>
        <dbReference type="ChEBI" id="CHEBI:18420"/>
    </ligand>
</feature>
<feature type="binding site" evidence="1">
    <location>
        <begin position="225"/>
        <end position="229"/>
    </location>
    <ligand>
        <name>GTP</name>
        <dbReference type="ChEBI" id="CHEBI:37565"/>
    </ligand>
</feature>
<feature type="binding site" evidence="1">
    <location>
        <position position="227"/>
    </location>
    <ligand>
        <name>Mg(2+)</name>
        <dbReference type="ChEBI" id="CHEBI:18420"/>
    </ligand>
</feature>
<feature type="binding site" evidence="1">
    <location>
        <begin position="246"/>
        <end position="249"/>
    </location>
    <ligand>
        <name>GTP</name>
        <dbReference type="ChEBI" id="CHEBI:37565"/>
    </ligand>
</feature>
<feature type="binding site" evidence="1">
    <location>
        <begin position="314"/>
        <end position="317"/>
    </location>
    <ligand>
        <name>GTP</name>
        <dbReference type="ChEBI" id="CHEBI:37565"/>
    </ligand>
</feature>
<feature type="binding site" evidence="1">
    <location>
        <begin position="349"/>
        <end position="351"/>
    </location>
    <ligand>
        <name>GTP</name>
        <dbReference type="ChEBI" id="CHEBI:37565"/>
    </ligand>
</feature>
<reference key="1">
    <citation type="journal article" date="2007" name="Archaea">
        <title>The genome of Hyperthermus butylicus: a sulfur-reducing, peptide fermenting, neutrophilic Crenarchaeote growing up to 108 degrees C.</title>
        <authorList>
            <person name="Bruegger K."/>
            <person name="Chen L."/>
            <person name="Stark M."/>
            <person name="Zibat A."/>
            <person name="Redder P."/>
            <person name="Ruepp A."/>
            <person name="Awayez M."/>
            <person name="She Q."/>
            <person name="Garrett R.A."/>
            <person name="Klenk H.-P."/>
        </authorList>
    </citation>
    <scope>NUCLEOTIDE SEQUENCE [LARGE SCALE GENOMIC DNA]</scope>
    <source>
        <strain>DSM 5456 / JCM 9403 / PLM1-5</strain>
    </source>
</reference>
<gene>
    <name evidence="1" type="primary">hflX</name>
    <name type="ordered locus">Hbut_1138</name>
</gene>
<keyword id="KW-0963">Cytoplasm</keyword>
<keyword id="KW-0342">GTP-binding</keyword>
<keyword id="KW-0460">Magnesium</keyword>
<keyword id="KW-0479">Metal-binding</keyword>
<keyword id="KW-0547">Nucleotide-binding</keyword>
<keyword id="KW-1185">Reference proteome</keyword>
<comment type="function">
    <text evidence="1">GTPase that associates with the 50S ribosomal subunit and may have a role during protein synthesis or ribosome biogenesis.</text>
</comment>
<comment type="cofactor">
    <cofactor evidence="1">
        <name>Mg(2+)</name>
        <dbReference type="ChEBI" id="CHEBI:18420"/>
    </cofactor>
</comment>
<comment type="subunit">
    <text evidence="1">Monomer. Associates with the 50S ribosomal subunit.</text>
</comment>
<comment type="subcellular location">
    <subcellularLocation>
        <location evidence="1">Cytoplasm</location>
    </subcellularLocation>
    <text evidence="1">May associate with membranes.</text>
</comment>
<comment type="similarity">
    <text evidence="1">Belongs to the TRAFAC class OBG-HflX-like GTPase superfamily. HflX GTPase family.</text>
</comment>
<dbReference type="EMBL" id="CP000493">
    <property type="protein sequence ID" value="ABM80975.1"/>
    <property type="molecule type" value="Genomic_DNA"/>
</dbReference>
<dbReference type="RefSeq" id="WP_011822293.1">
    <property type="nucleotide sequence ID" value="NC_008818.1"/>
</dbReference>
<dbReference type="SMR" id="A2BLW4"/>
<dbReference type="STRING" id="415426.Hbut_1138"/>
<dbReference type="EnsemblBacteria" id="ABM80975">
    <property type="protein sequence ID" value="ABM80975"/>
    <property type="gene ID" value="Hbut_1138"/>
</dbReference>
<dbReference type="GeneID" id="4782129"/>
<dbReference type="KEGG" id="hbu:Hbut_1138"/>
<dbReference type="eggNOG" id="arCOG00353">
    <property type="taxonomic scope" value="Archaea"/>
</dbReference>
<dbReference type="HOGENOM" id="CLU_019597_2_0_2"/>
<dbReference type="OrthoDB" id="10150at2157"/>
<dbReference type="Proteomes" id="UP000002593">
    <property type="component" value="Chromosome"/>
</dbReference>
<dbReference type="GO" id="GO:0005737">
    <property type="term" value="C:cytoplasm"/>
    <property type="evidence" value="ECO:0007669"/>
    <property type="project" value="UniProtKB-SubCell"/>
</dbReference>
<dbReference type="GO" id="GO:0005525">
    <property type="term" value="F:GTP binding"/>
    <property type="evidence" value="ECO:0007669"/>
    <property type="project" value="UniProtKB-UniRule"/>
</dbReference>
<dbReference type="GO" id="GO:0003924">
    <property type="term" value="F:GTPase activity"/>
    <property type="evidence" value="ECO:0007669"/>
    <property type="project" value="UniProtKB-UniRule"/>
</dbReference>
<dbReference type="GO" id="GO:0046872">
    <property type="term" value="F:metal ion binding"/>
    <property type="evidence" value="ECO:0007669"/>
    <property type="project" value="UniProtKB-KW"/>
</dbReference>
<dbReference type="GO" id="GO:0043022">
    <property type="term" value="F:ribosome binding"/>
    <property type="evidence" value="ECO:0007669"/>
    <property type="project" value="TreeGrafter"/>
</dbReference>
<dbReference type="CDD" id="cd01878">
    <property type="entry name" value="HflX"/>
    <property type="match status" value="1"/>
</dbReference>
<dbReference type="Gene3D" id="6.10.250.2860">
    <property type="match status" value="1"/>
</dbReference>
<dbReference type="Gene3D" id="3.40.50.11060">
    <property type="entry name" value="GTPase HflX, N-terminal domain"/>
    <property type="match status" value="1"/>
</dbReference>
<dbReference type="Gene3D" id="3.40.50.300">
    <property type="entry name" value="P-loop containing nucleotide triphosphate hydrolases"/>
    <property type="match status" value="1"/>
</dbReference>
<dbReference type="HAMAP" id="MF_00900">
    <property type="entry name" value="GTPase_HflX"/>
    <property type="match status" value="1"/>
</dbReference>
<dbReference type="InterPro" id="IPR030394">
    <property type="entry name" value="G_HFLX_dom"/>
</dbReference>
<dbReference type="InterPro" id="IPR006073">
    <property type="entry name" value="GTP-bd"/>
</dbReference>
<dbReference type="InterPro" id="IPR032305">
    <property type="entry name" value="GTP-bd_M"/>
</dbReference>
<dbReference type="InterPro" id="IPR016496">
    <property type="entry name" value="GTPase_HflX"/>
</dbReference>
<dbReference type="InterPro" id="IPR025121">
    <property type="entry name" value="GTPase_HflX_N"/>
</dbReference>
<dbReference type="InterPro" id="IPR042108">
    <property type="entry name" value="GTPase_HflX_N_sf"/>
</dbReference>
<dbReference type="InterPro" id="IPR027417">
    <property type="entry name" value="P-loop_NTPase"/>
</dbReference>
<dbReference type="NCBIfam" id="TIGR03156">
    <property type="entry name" value="GTP_HflX"/>
    <property type="match status" value="1"/>
</dbReference>
<dbReference type="PANTHER" id="PTHR10229">
    <property type="entry name" value="GTP-BINDING PROTEIN HFLX"/>
    <property type="match status" value="1"/>
</dbReference>
<dbReference type="PANTHER" id="PTHR10229:SF8">
    <property type="entry name" value="GTPASE HFLX"/>
    <property type="match status" value="1"/>
</dbReference>
<dbReference type="Pfam" id="PF16360">
    <property type="entry name" value="GTP-bdg_M"/>
    <property type="match status" value="1"/>
</dbReference>
<dbReference type="Pfam" id="PF13167">
    <property type="entry name" value="GTP-bdg_N"/>
    <property type="match status" value="1"/>
</dbReference>
<dbReference type="Pfam" id="PF01926">
    <property type="entry name" value="MMR_HSR1"/>
    <property type="match status" value="1"/>
</dbReference>
<dbReference type="PIRSF" id="PIRSF006809">
    <property type="entry name" value="GTP-binding_hflX_prd"/>
    <property type="match status" value="1"/>
</dbReference>
<dbReference type="PRINTS" id="PR00326">
    <property type="entry name" value="GTP1OBG"/>
</dbReference>
<dbReference type="SUPFAM" id="SSF52540">
    <property type="entry name" value="P-loop containing nucleoside triphosphate hydrolases"/>
    <property type="match status" value="1"/>
</dbReference>
<dbReference type="PROSITE" id="PS51705">
    <property type="entry name" value="G_HFLX"/>
    <property type="match status" value="1"/>
</dbReference>
<sequence length="375" mass="41777">MAKVAVWKPSILVLPRGLARWEVREAYVLAETAGYRVVDVLYYRRVSSSKLLSDAKLEELAEKAKSLVGNEYARIIVYDNLKPREYFRIVKATGVNTIDRTMLILEIFSLHAGSREAKLQIELARLRHELPLVREAIRLSKLKELPGFLGPGGYAIDAYYRYMVSRIAKIKRELRELRRRHEIERSKRRSAGLPHIAIVGYASAGKTSLFNAITGLQKPVGPEYFTTITPKRRAISFNGLRTVFIDTVGFIMRIPPEIIEAFHSTLEEAATADVILYVVDVSEPDTVIAEKLDEGLQTLRRIGVIDKPLIIAANKIDLVPQEDIERLTRLLEGAASTLYPALEAVIPVSAKTGAGVAKLLCRIATLLAGTKGSTC</sequence>
<accession>A2BLW4</accession>
<evidence type="ECO:0000255" key="1">
    <source>
        <dbReference type="HAMAP-Rule" id="MF_00900"/>
    </source>
</evidence>